<name>IRTA_MYCS2</name>
<organism>
    <name type="scientific">Mycolicibacterium smegmatis (strain ATCC 700084 / mc(2)155)</name>
    <name type="common">Mycobacterium smegmatis</name>
    <dbReference type="NCBI Taxonomy" id="246196"/>
    <lineage>
        <taxon>Bacteria</taxon>
        <taxon>Bacillati</taxon>
        <taxon>Actinomycetota</taxon>
        <taxon>Actinomycetes</taxon>
        <taxon>Mycobacteriales</taxon>
        <taxon>Mycobacteriaceae</taxon>
        <taxon>Mycolicibacterium</taxon>
    </lineage>
</organism>
<gene>
    <name evidence="8" type="primary">irtA</name>
    <name evidence="10" type="ordered locus">MSMEG_6554</name>
    <name evidence="11" type="ordered locus">MSMEI_6377</name>
</gene>
<accession>A0R6H8</accession>
<accession>I7FV42</accession>
<feature type="chain" id="PRO_0000450628" description="Mycobactin import ATP-binding/permease protein IrtA">
    <location>
        <begin position="1"/>
        <end position="860"/>
    </location>
</feature>
<feature type="topological domain" description="Cytoplasmic" evidence="9">
    <location>
        <begin position="1"/>
        <end position="293"/>
    </location>
</feature>
<feature type="transmembrane region" description="Helical" evidence="2 4">
    <location>
        <begin position="294"/>
        <end position="314"/>
    </location>
</feature>
<feature type="topological domain" description="Periplasmic" evidence="9">
    <location>
        <begin position="315"/>
        <end position="335"/>
    </location>
</feature>
<feature type="transmembrane region" description="Helical" evidence="2 4">
    <location>
        <begin position="336"/>
        <end position="356"/>
    </location>
</feature>
<feature type="topological domain" description="Cytoplasmic" evidence="9">
    <location>
        <begin position="357"/>
        <end position="409"/>
    </location>
</feature>
<feature type="transmembrane region" description="Helical" evidence="2 4">
    <location>
        <begin position="410"/>
        <end position="430"/>
    </location>
</feature>
<feature type="topological domain" description="Periplasmic" evidence="9">
    <location>
        <begin position="431"/>
        <end position="433"/>
    </location>
</feature>
<feature type="transmembrane region" description="Helical" evidence="2 4">
    <location>
        <begin position="434"/>
        <end position="454"/>
    </location>
</feature>
<feature type="topological domain" description="Cytoplasmic" evidence="9">
    <location>
        <begin position="455"/>
        <end position="525"/>
    </location>
</feature>
<feature type="transmembrane region" description="Helical" evidence="2 4">
    <location>
        <begin position="526"/>
        <end position="546"/>
    </location>
</feature>
<feature type="topological domain" description="Periplasmic" evidence="9">
    <location>
        <begin position="547"/>
        <end position="550"/>
    </location>
</feature>
<feature type="transmembrane region" description="Helical" evidence="2 4">
    <location>
        <begin position="551"/>
        <end position="571"/>
    </location>
</feature>
<feature type="topological domain" description="Cytoplasmic" evidence="9">
    <location>
        <begin position="572"/>
        <end position="860"/>
    </location>
</feature>
<feature type="domain" description="FAD-binding FR-type" evidence="5">
    <location>
        <begin position="15"/>
        <end position="124"/>
    </location>
</feature>
<feature type="domain" description="ABC transmembrane type-1" evidence="4">
    <location>
        <begin position="295"/>
        <end position="577"/>
    </location>
</feature>
<feature type="domain" description="ABC transporter" evidence="3">
    <location>
        <begin position="609"/>
        <end position="842"/>
    </location>
</feature>
<feature type="region of interest" description="Disordered" evidence="6">
    <location>
        <begin position="242"/>
        <end position="275"/>
    </location>
</feature>
<feature type="binding site" evidence="1">
    <location>
        <begin position="70"/>
        <end position="73"/>
    </location>
    <ligand>
        <name>FAD</name>
        <dbReference type="ChEBI" id="CHEBI:57692"/>
    </ligand>
</feature>
<feature type="binding site" evidence="1">
    <location>
        <begin position="87"/>
        <end position="91"/>
    </location>
    <ligand>
        <name>FAD</name>
        <dbReference type="ChEBI" id="CHEBI:57692"/>
    </ligand>
</feature>
<feature type="binding site" evidence="1">
    <location>
        <begin position="97"/>
        <end position="98"/>
    </location>
    <ligand>
        <name>FAD</name>
        <dbReference type="ChEBI" id="CHEBI:57692"/>
    </ligand>
</feature>
<feature type="binding site" evidence="1">
    <location>
        <begin position="238"/>
        <end position="240"/>
    </location>
    <ligand>
        <name>FAD</name>
        <dbReference type="ChEBI" id="CHEBI:57692"/>
    </ligand>
</feature>
<feature type="binding site" evidence="3">
    <location>
        <begin position="642"/>
        <end position="649"/>
    </location>
    <ligand>
        <name>ATP</name>
        <dbReference type="ChEBI" id="CHEBI:30616"/>
    </ligand>
</feature>
<feature type="mutagenesis site" description="Cannot reduce Fe(III)-cMBT and Fe(III)-MBT; when associated with E-234 and E-241." evidence="7">
    <original>R</original>
    <variation>E</variation>
    <location>
        <position position="55"/>
    </location>
</feature>
<feature type="mutagenesis site" description="Cannot reduce Fe(III)-cMBT and Fe(III)-MBT; when associated with E-55 and E-241." evidence="7">
    <original>Q</original>
    <variation>E</variation>
    <location>
        <position position="234"/>
    </location>
</feature>
<feature type="mutagenesis site" description="Cannot reduce Fe(III)-cMBT and Fe(III)-MBT; when associated with E-55 and E-234." evidence="7">
    <original>R</original>
    <variation>E</variation>
    <location>
        <position position="241"/>
    </location>
</feature>
<sequence length="860" mass="93263">MARGIQGVMMRGFGARDHQATVVSTEAITPNLLRLRMVSPTLFEDAVAEPTSWLRFWFPDPAGSKTEFQRAYTMSEMSPETGEFAIDVVLHEPAGPASRWARSAKPGDAIAVMTLGSAGFSVPEDPPAGYLLIGDAAATPAINGIIGVVPHDIPIEVYLEEHDENDRLIPIAEHPRMRVHWVVREDATSLAGAIEARDWSNWYCWVTPEAGSLKHLRTRLRDEFGFPKAELHPQAYWTEGRAMGTKRGDDDKTPEVNPAPRADKPEAPAPAAAGRGNWRAQAAGRLLAPLKTTLIISGVLQAIITLVQLAPFVLLVELARLLLSGASSDRLWTLGVVAISLLGTGSFLAAALTLWLHLVDARFARDLRTGLLTKMSRLPLGWFTARGSGSIKQLVQDDTLSLHYLITHAIPDAVAAVIAPVAVLVYLFVVDWRLALVMFVPVLIYLVLMTVMTIQSGPKIAQSQRWAERMSAEAGAYLEGQPVVRVFGGAAASSFRRRLDEYIGFLVAWQKPFTGKKSMMDLVTRPGTFLWLIVAVGTPMITSGAMDPVDILPFLLLGTTFGVRLLGIAYGLGGIRGGMLAARRIQTTLDETELVIREQTGKRDGEPAVVFDNVTFGYRPDIPVLHDISLQLTPGTVTALVGPSGSGKSTLAALLARFHDVDAGAIRLGGRDIRTLTADELYRQVGFVLQDTQLVGGTVAENIALADPDASIERIQDAARDAQIHDRIMRLPNGYDTPLGAASSLSGGEKQRLTIARAILADTPVLILDEATAFADPESEYLVQQALNRLTRDRTVLVIAHRLHTITHADQIVVLEGGRIVETGTHERLLDAAGRYRQLWETGQRPALATAAGPTGEAVR</sequence>
<comment type="function">
    <text evidence="7">Part of the ABC transporter complex IrtAB involved in the import of iron-bound mycobactin (Fe-MBT) and carboxymycobactin (Fe-cMBT) (PubMed:32296173). Has a preference for Fe-MBT over Fe-cMBT (PubMed:32296173). Mycobactins are then reduced by the siderophore interaction domain to facilitate iron release in the bacterial cell (PubMed:32296173). Transmembrane domains (TMD) form a pore in the membrane and the ATP-binding domain (NBD) is responsible for energy generation (PubMed:32296173).</text>
</comment>
<comment type="cofactor">
    <cofactor evidence="1">
        <name>FAD</name>
        <dbReference type="ChEBI" id="CHEBI:57692"/>
    </cofactor>
</comment>
<comment type="subunit">
    <text evidence="7">Forms a heterodimer with IrtB.</text>
</comment>
<comment type="subcellular location">
    <subcellularLocation>
        <location evidence="1">Cell inner membrane</location>
        <topology evidence="1">Multi-pass membrane protein</topology>
    </subcellularLocation>
</comment>
<comment type="domain">
    <text evidence="7">In IrtA the ATP-binding domain (NBD) and the transmembrane domain (TMD) are fused. In addition, IrtA contains an N-terminal siderophore interaction domain (SID) that binds FAD.</text>
</comment>
<comment type="similarity">
    <text evidence="9">Belongs to the ABC transporter superfamily. Siderophore-Fe(3+) uptake transporter (SIUT) (TC 3.A.1.21) family.</text>
</comment>
<dbReference type="EC" id="7.2.2.-" evidence="7"/>
<dbReference type="EMBL" id="CP000480">
    <property type="protein sequence ID" value="ABK72388.1"/>
    <property type="molecule type" value="Genomic_DNA"/>
</dbReference>
<dbReference type="EMBL" id="CP001663">
    <property type="protein sequence ID" value="AFP42803.1"/>
    <property type="molecule type" value="Genomic_DNA"/>
</dbReference>
<dbReference type="RefSeq" id="WP_011731355.1">
    <property type="nucleotide sequence ID" value="NZ_SIJM01000033.1"/>
</dbReference>
<dbReference type="RefSeq" id="YP_890766.1">
    <property type="nucleotide sequence ID" value="NC_008596.1"/>
</dbReference>
<dbReference type="SMR" id="A0R6H8"/>
<dbReference type="STRING" id="246196.MSMEG_6554"/>
<dbReference type="PaxDb" id="246196-MSMEI_6377"/>
<dbReference type="GeneID" id="93461143"/>
<dbReference type="KEGG" id="msb:LJ00_32395"/>
<dbReference type="KEGG" id="msg:MSMEI_6377"/>
<dbReference type="KEGG" id="msm:MSMEG_6554"/>
<dbReference type="PATRIC" id="fig|246196.19.peg.6378"/>
<dbReference type="eggNOG" id="COG1132">
    <property type="taxonomic scope" value="Bacteria"/>
</dbReference>
<dbReference type="eggNOG" id="COG2375">
    <property type="taxonomic scope" value="Bacteria"/>
</dbReference>
<dbReference type="OrthoDB" id="9806127at2"/>
<dbReference type="Proteomes" id="UP000000757">
    <property type="component" value="Chromosome"/>
</dbReference>
<dbReference type="Proteomes" id="UP000006158">
    <property type="component" value="Chromosome"/>
</dbReference>
<dbReference type="GO" id="GO:0005886">
    <property type="term" value="C:plasma membrane"/>
    <property type="evidence" value="ECO:0007669"/>
    <property type="project" value="UniProtKB-SubCell"/>
</dbReference>
<dbReference type="GO" id="GO:0140359">
    <property type="term" value="F:ABC-type transporter activity"/>
    <property type="evidence" value="ECO:0007669"/>
    <property type="project" value="InterPro"/>
</dbReference>
<dbReference type="GO" id="GO:0005524">
    <property type="term" value="F:ATP binding"/>
    <property type="evidence" value="ECO:0007669"/>
    <property type="project" value="UniProtKB-KW"/>
</dbReference>
<dbReference type="GO" id="GO:0016887">
    <property type="term" value="F:ATP hydrolysis activity"/>
    <property type="evidence" value="ECO:0007669"/>
    <property type="project" value="InterPro"/>
</dbReference>
<dbReference type="GO" id="GO:0016491">
    <property type="term" value="F:oxidoreductase activity"/>
    <property type="evidence" value="ECO:0007669"/>
    <property type="project" value="InterPro"/>
</dbReference>
<dbReference type="CDD" id="cd06193">
    <property type="entry name" value="siderophore_interacting"/>
    <property type="match status" value="1"/>
</dbReference>
<dbReference type="FunFam" id="3.40.50.300:FF:000221">
    <property type="entry name" value="Multidrug ABC transporter ATP-binding protein"/>
    <property type="match status" value="1"/>
</dbReference>
<dbReference type="Gene3D" id="1.20.1560.10">
    <property type="entry name" value="ABC transporter type 1, transmembrane domain"/>
    <property type="match status" value="1"/>
</dbReference>
<dbReference type="Gene3D" id="3.40.50.80">
    <property type="entry name" value="Nucleotide-binding domain of ferredoxin-NADP reductase (FNR) module"/>
    <property type="match status" value="1"/>
</dbReference>
<dbReference type="Gene3D" id="3.40.50.300">
    <property type="entry name" value="P-loop containing nucleotide triphosphate hydrolases"/>
    <property type="match status" value="1"/>
</dbReference>
<dbReference type="Gene3D" id="2.40.30.10">
    <property type="entry name" value="Translation factors"/>
    <property type="match status" value="1"/>
</dbReference>
<dbReference type="InterPro" id="IPR003593">
    <property type="entry name" value="AAA+_ATPase"/>
</dbReference>
<dbReference type="InterPro" id="IPR011527">
    <property type="entry name" value="ABC1_TM_dom"/>
</dbReference>
<dbReference type="InterPro" id="IPR036640">
    <property type="entry name" value="ABC1_TM_sf"/>
</dbReference>
<dbReference type="InterPro" id="IPR003439">
    <property type="entry name" value="ABC_transporter-like_ATP-bd"/>
</dbReference>
<dbReference type="InterPro" id="IPR017871">
    <property type="entry name" value="ABC_transporter-like_CS"/>
</dbReference>
<dbReference type="InterPro" id="IPR013113">
    <property type="entry name" value="FAD-bd_9_SIP"/>
</dbReference>
<dbReference type="InterPro" id="IPR017927">
    <property type="entry name" value="FAD-bd_FR_type"/>
</dbReference>
<dbReference type="InterPro" id="IPR039261">
    <property type="entry name" value="FNR_nucleotide-bd"/>
</dbReference>
<dbReference type="InterPro" id="IPR027417">
    <property type="entry name" value="P-loop_NTPase"/>
</dbReference>
<dbReference type="InterPro" id="IPR017938">
    <property type="entry name" value="Riboflavin_synthase-like_b-brl"/>
</dbReference>
<dbReference type="InterPro" id="IPR007037">
    <property type="entry name" value="SIP_C"/>
</dbReference>
<dbReference type="InterPro" id="IPR039421">
    <property type="entry name" value="Type_1_exporter"/>
</dbReference>
<dbReference type="PANTHER" id="PTHR24221">
    <property type="entry name" value="ATP-BINDING CASSETTE SUB-FAMILY B"/>
    <property type="match status" value="1"/>
</dbReference>
<dbReference type="PANTHER" id="PTHR24221:SF654">
    <property type="entry name" value="ATP-BINDING CASSETTE SUB-FAMILY B MEMBER 6"/>
    <property type="match status" value="1"/>
</dbReference>
<dbReference type="Pfam" id="PF00664">
    <property type="entry name" value="ABC_membrane"/>
    <property type="match status" value="1"/>
</dbReference>
<dbReference type="Pfam" id="PF00005">
    <property type="entry name" value="ABC_tran"/>
    <property type="match status" value="1"/>
</dbReference>
<dbReference type="Pfam" id="PF08021">
    <property type="entry name" value="FAD_binding_9"/>
    <property type="match status" value="1"/>
</dbReference>
<dbReference type="Pfam" id="PF04954">
    <property type="entry name" value="SIP"/>
    <property type="match status" value="1"/>
</dbReference>
<dbReference type="SMART" id="SM00382">
    <property type="entry name" value="AAA"/>
    <property type="match status" value="1"/>
</dbReference>
<dbReference type="SUPFAM" id="SSF90123">
    <property type="entry name" value="ABC transporter transmembrane region"/>
    <property type="match status" value="1"/>
</dbReference>
<dbReference type="SUPFAM" id="SSF52540">
    <property type="entry name" value="P-loop containing nucleoside triphosphate hydrolases"/>
    <property type="match status" value="1"/>
</dbReference>
<dbReference type="SUPFAM" id="SSF63380">
    <property type="entry name" value="Riboflavin synthase domain-like"/>
    <property type="match status" value="1"/>
</dbReference>
<dbReference type="PROSITE" id="PS50929">
    <property type="entry name" value="ABC_TM1F"/>
    <property type="match status" value="1"/>
</dbReference>
<dbReference type="PROSITE" id="PS00211">
    <property type="entry name" value="ABC_TRANSPORTER_1"/>
    <property type="match status" value="1"/>
</dbReference>
<dbReference type="PROSITE" id="PS50893">
    <property type="entry name" value="ABC_TRANSPORTER_2"/>
    <property type="match status" value="1"/>
</dbReference>
<dbReference type="PROSITE" id="PS51384">
    <property type="entry name" value="FAD_FR"/>
    <property type="match status" value="1"/>
</dbReference>
<keyword id="KW-0067">ATP-binding</keyword>
<keyword id="KW-0997">Cell inner membrane</keyword>
<keyword id="KW-1003">Cell membrane</keyword>
<keyword id="KW-0274">FAD</keyword>
<keyword id="KW-0285">Flavoprotein</keyword>
<keyword id="KW-0472">Membrane</keyword>
<keyword id="KW-0547">Nucleotide-binding</keyword>
<keyword id="KW-1185">Reference proteome</keyword>
<keyword id="KW-1278">Translocase</keyword>
<keyword id="KW-0812">Transmembrane</keyword>
<keyword id="KW-1133">Transmembrane helix</keyword>
<keyword id="KW-0813">Transport</keyword>
<proteinExistence type="evidence at protein level"/>
<reference key="1">
    <citation type="submission" date="2006-10" db="EMBL/GenBank/DDBJ databases">
        <authorList>
            <person name="Fleischmann R.D."/>
            <person name="Dodson R.J."/>
            <person name="Haft D.H."/>
            <person name="Merkel J.S."/>
            <person name="Nelson W.C."/>
            <person name="Fraser C.M."/>
        </authorList>
    </citation>
    <scope>NUCLEOTIDE SEQUENCE [LARGE SCALE GENOMIC DNA]</scope>
    <source>
        <strain>ATCC 700084 / mc(2)155</strain>
    </source>
</reference>
<reference key="2">
    <citation type="journal article" date="2007" name="Genome Biol.">
        <title>Interrupted coding sequences in Mycobacterium smegmatis: authentic mutations or sequencing errors?</title>
        <authorList>
            <person name="Deshayes C."/>
            <person name="Perrodou E."/>
            <person name="Gallien S."/>
            <person name="Euphrasie D."/>
            <person name="Schaeffer C."/>
            <person name="Van-Dorsselaer A."/>
            <person name="Poch O."/>
            <person name="Lecompte O."/>
            <person name="Reyrat J.-M."/>
        </authorList>
    </citation>
    <scope>NUCLEOTIDE SEQUENCE [LARGE SCALE GENOMIC DNA]</scope>
    <source>
        <strain>ATCC 700084 / mc(2)155</strain>
    </source>
</reference>
<reference key="3">
    <citation type="journal article" date="2009" name="Genome Res.">
        <title>Ortho-proteogenomics: multiple proteomes investigation through orthology and a new MS-based protocol.</title>
        <authorList>
            <person name="Gallien S."/>
            <person name="Perrodou E."/>
            <person name="Carapito C."/>
            <person name="Deshayes C."/>
            <person name="Reyrat J.-M."/>
            <person name="Van Dorsselaer A."/>
            <person name="Poch O."/>
            <person name="Schaeffer C."/>
            <person name="Lecompte O."/>
        </authorList>
    </citation>
    <scope>NUCLEOTIDE SEQUENCE [LARGE SCALE GENOMIC DNA]</scope>
    <source>
        <strain>ATCC 700084 / mc(2)155</strain>
    </source>
</reference>
<reference key="4">
    <citation type="journal article" date="2020" name="Nature">
        <title>The ABC exporter IrtAB imports and reduces mycobacterial siderophores.</title>
        <authorList>
            <person name="Arnold F.M."/>
            <person name="Weber M.S."/>
            <person name="Gonda I."/>
            <person name="Gallenito M.J."/>
            <person name="Adenau S."/>
            <person name="Egloff P."/>
            <person name="Zimmermann I."/>
            <person name="Hutter C.A.J."/>
            <person name="Huerlimann L.M."/>
            <person name="Peters E.E."/>
            <person name="Piel J."/>
            <person name="Meloni G."/>
            <person name="Medalia O."/>
            <person name="Seeger M.A."/>
        </authorList>
    </citation>
    <scope>FUNCTION</scope>
    <scope>SUBUNIT</scope>
    <scope>DOMAIN</scope>
    <scope>MUTAGENESIS OF ARG-55; GLN-234 AND ARG-241</scope>
    <source>
        <strain>ATCC 700084 / mc(2)155</strain>
    </source>
</reference>
<evidence type="ECO:0000250" key="1">
    <source>
        <dbReference type="UniProtKB" id="G7CBF5"/>
    </source>
</evidence>
<evidence type="ECO:0000255" key="2"/>
<evidence type="ECO:0000255" key="3">
    <source>
        <dbReference type="PROSITE-ProRule" id="PRU00434"/>
    </source>
</evidence>
<evidence type="ECO:0000255" key="4">
    <source>
        <dbReference type="PROSITE-ProRule" id="PRU00441"/>
    </source>
</evidence>
<evidence type="ECO:0000255" key="5">
    <source>
        <dbReference type="PROSITE-ProRule" id="PRU00716"/>
    </source>
</evidence>
<evidence type="ECO:0000256" key="6">
    <source>
        <dbReference type="SAM" id="MobiDB-lite"/>
    </source>
</evidence>
<evidence type="ECO:0000269" key="7">
    <source>
    </source>
</evidence>
<evidence type="ECO:0000303" key="8">
    <source>
    </source>
</evidence>
<evidence type="ECO:0000305" key="9"/>
<evidence type="ECO:0000312" key="10">
    <source>
        <dbReference type="EMBL" id="ABK72388.1"/>
    </source>
</evidence>
<evidence type="ECO:0000312" key="11">
    <source>
        <dbReference type="EMBL" id="AFP42803.1"/>
    </source>
</evidence>
<protein>
    <recommendedName>
        <fullName evidence="9">Mycobactin import ATP-binding/permease protein IrtA</fullName>
        <ecNumber evidence="7">7.2.2.-</ecNumber>
    </recommendedName>
</protein>